<proteinExistence type="inferred from homology"/>
<protein>
    <recommendedName>
        <fullName evidence="1">Large ribosomal subunit protein uL2</fullName>
    </recommendedName>
    <alternativeName>
        <fullName evidence="3">50S ribosomal protein L2</fullName>
    </alternativeName>
</protein>
<dbReference type="EMBL" id="X14363">
    <property type="protein sequence ID" value="CAA32545.1"/>
    <property type="molecule type" value="Genomic_DNA"/>
</dbReference>
<dbReference type="EMBL" id="BX936398">
    <property type="protein sequence ID" value="CAH22933.1"/>
    <property type="molecule type" value="Genomic_DNA"/>
</dbReference>
<dbReference type="PIR" id="S04143">
    <property type="entry name" value="R5EB2Y"/>
</dbReference>
<dbReference type="RefSeq" id="WP_002213425.1">
    <property type="nucleotide sequence ID" value="NZ_CP009712.1"/>
</dbReference>
<dbReference type="SMR" id="P60437"/>
<dbReference type="GeneID" id="97454234"/>
<dbReference type="KEGG" id="ypo:BZ17_2892"/>
<dbReference type="KEGG" id="yps:YPTB3695"/>
<dbReference type="PATRIC" id="fig|273123.14.peg.3033"/>
<dbReference type="Proteomes" id="UP000001011">
    <property type="component" value="Chromosome"/>
</dbReference>
<dbReference type="GO" id="GO:0015934">
    <property type="term" value="C:large ribosomal subunit"/>
    <property type="evidence" value="ECO:0007669"/>
    <property type="project" value="InterPro"/>
</dbReference>
<dbReference type="GO" id="GO:0019843">
    <property type="term" value="F:rRNA binding"/>
    <property type="evidence" value="ECO:0007669"/>
    <property type="project" value="UniProtKB-UniRule"/>
</dbReference>
<dbReference type="GO" id="GO:0003735">
    <property type="term" value="F:structural constituent of ribosome"/>
    <property type="evidence" value="ECO:0007669"/>
    <property type="project" value="InterPro"/>
</dbReference>
<dbReference type="GO" id="GO:0016740">
    <property type="term" value="F:transferase activity"/>
    <property type="evidence" value="ECO:0007669"/>
    <property type="project" value="InterPro"/>
</dbReference>
<dbReference type="GO" id="GO:0002181">
    <property type="term" value="P:cytoplasmic translation"/>
    <property type="evidence" value="ECO:0007669"/>
    <property type="project" value="TreeGrafter"/>
</dbReference>
<dbReference type="FunFam" id="2.30.30.30:FF:000001">
    <property type="entry name" value="50S ribosomal protein L2"/>
    <property type="match status" value="1"/>
</dbReference>
<dbReference type="FunFam" id="2.40.50.140:FF:000003">
    <property type="entry name" value="50S ribosomal protein L2"/>
    <property type="match status" value="1"/>
</dbReference>
<dbReference type="FunFam" id="4.10.950.10:FF:000001">
    <property type="entry name" value="50S ribosomal protein L2"/>
    <property type="match status" value="1"/>
</dbReference>
<dbReference type="Gene3D" id="2.30.30.30">
    <property type="match status" value="1"/>
</dbReference>
<dbReference type="Gene3D" id="2.40.50.140">
    <property type="entry name" value="Nucleic acid-binding proteins"/>
    <property type="match status" value="1"/>
</dbReference>
<dbReference type="Gene3D" id="4.10.950.10">
    <property type="entry name" value="Ribosomal protein L2, domain 3"/>
    <property type="match status" value="1"/>
</dbReference>
<dbReference type="HAMAP" id="MF_01320_B">
    <property type="entry name" value="Ribosomal_uL2_B"/>
    <property type="match status" value="1"/>
</dbReference>
<dbReference type="InterPro" id="IPR012340">
    <property type="entry name" value="NA-bd_OB-fold"/>
</dbReference>
<dbReference type="InterPro" id="IPR014722">
    <property type="entry name" value="Rib_uL2_dom2"/>
</dbReference>
<dbReference type="InterPro" id="IPR002171">
    <property type="entry name" value="Ribosomal_uL2"/>
</dbReference>
<dbReference type="InterPro" id="IPR005880">
    <property type="entry name" value="Ribosomal_uL2_bac/org-type"/>
</dbReference>
<dbReference type="InterPro" id="IPR022669">
    <property type="entry name" value="Ribosomal_uL2_C"/>
</dbReference>
<dbReference type="InterPro" id="IPR022671">
    <property type="entry name" value="Ribosomal_uL2_CS"/>
</dbReference>
<dbReference type="InterPro" id="IPR014726">
    <property type="entry name" value="Ribosomal_uL2_dom3"/>
</dbReference>
<dbReference type="InterPro" id="IPR022666">
    <property type="entry name" value="Ribosomal_uL2_RNA-bd_dom"/>
</dbReference>
<dbReference type="InterPro" id="IPR008991">
    <property type="entry name" value="Translation_prot_SH3-like_sf"/>
</dbReference>
<dbReference type="NCBIfam" id="TIGR01171">
    <property type="entry name" value="rplB_bact"/>
    <property type="match status" value="1"/>
</dbReference>
<dbReference type="PANTHER" id="PTHR13691:SF5">
    <property type="entry name" value="LARGE RIBOSOMAL SUBUNIT PROTEIN UL2M"/>
    <property type="match status" value="1"/>
</dbReference>
<dbReference type="PANTHER" id="PTHR13691">
    <property type="entry name" value="RIBOSOMAL PROTEIN L2"/>
    <property type="match status" value="1"/>
</dbReference>
<dbReference type="Pfam" id="PF00181">
    <property type="entry name" value="Ribosomal_L2"/>
    <property type="match status" value="1"/>
</dbReference>
<dbReference type="Pfam" id="PF03947">
    <property type="entry name" value="Ribosomal_L2_C"/>
    <property type="match status" value="1"/>
</dbReference>
<dbReference type="PIRSF" id="PIRSF002158">
    <property type="entry name" value="Ribosomal_L2"/>
    <property type="match status" value="1"/>
</dbReference>
<dbReference type="SMART" id="SM01383">
    <property type="entry name" value="Ribosomal_L2"/>
    <property type="match status" value="1"/>
</dbReference>
<dbReference type="SMART" id="SM01382">
    <property type="entry name" value="Ribosomal_L2_C"/>
    <property type="match status" value="1"/>
</dbReference>
<dbReference type="SUPFAM" id="SSF50249">
    <property type="entry name" value="Nucleic acid-binding proteins"/>
    <property type="match status" value="1"/>
</dbReference>
<dbReference type="SUPFAM" id="SSF50104">
    <property type="entry name" value="Translation proteins SH3-like domain"/>
    <property type="match status" value="1"/>
</dbReference>
<dbReference type="PROSITE" id="PS00467">
    <property type="entry name" value="RIBOSOMAL_L2"/>
    <property type="match status" value="1"/>
</dbReference>
<comment type="function">
    <text evidence="1">One of the primary rRNA binding proteins. Required for association of the 30S and 50S subunits to form the 70S ribosome, for tRNA binding and peptide bond formation. It has been suggested to have peptidyltransferase activity; this is somewhat controversial. Makes several contacts with the 16S rRNA in the 70S ribosome.</text>
</comment>
<comment type="subunit">
    <text evidence="1">Part of the 50S ribosomal subunit. Forms a bridge to the 30S subunit in the 70S ribosome.</text>
</comment>
<comment type="similarity">
    <text evidence="1">Belongs to the universal ribosomal protein uL2 family.</text>
</comment>
<keyword id="KW-0687">Ribonucleoprotein</keyword>
<keyword id="KW-0689">Ribosomal protein</keyword>
<keyword id="KW-0694">RNA-binding</keyword>
<keyword id="KW-0699">rRNA-binding</keyword>
<reference key="1">
    <citation type="journal article" date="1989" name="Nucleic Acids Res.">
        <title>High degree of conservation between ribosomal proteins of Yersinia pseudotuberculosis and Escherichia coli.</title>
        <authorList>
            <person name="Gross U."/>
            <person name="Chen J.H."/>
            <person name="Kono D.H."/>
            <person name="Lobo J.G."/>
            <person name="Yu D.T.Y."/>
        </authorList>
    </citation>
    <scope>NUCLEOTIDE SEQUENCE [GENOMIC DNA]</scope>
</reference>
<reference key="2">
    <citation type="journal article" date="2004" name="Proc. Natl. Acad. Sci. U.S.A.">
        <title>Insights into the evolution of Yersinia pestis through whole-genome comparison with Yersinia pseudotuberculosis.</title>
        <authorList>
            <person name="Chain P.S.G."/>
            <person name="Carniel E."/>
            <person name="Larimer F.W."/>
            <person name="Lamerdin J."/>
            <person name="Stoutland P.O."/>
            <person name="Regala W.M."/>
            <person name="Georgescu A.M."/>
            <person name="Vergez L.M."/>
            <person name="Land M.L."/>
            <person name="Motin V.L."/>
            <person name="Brubaker R.R."/>
            <person name="Fowler J."/>
            <person name="Hinnebusch J."/>
            <person name="Marceau M."/>
            <person name="Medigue C."/>
            <person name="Simonet M."/>
            <person name="Chenal-Francisque V."/>
            <person name="Souza B."/>
            <person name="Dacheux D."/>
            <person name="Elliott J.M."/>
            <person name="Derbise A."/>
            <person name="Hauser L.J."/>
            <person name="Garcia E."/>
        </authorList>
    </citation>
    <scope>NUCLEOTIDE SEQUENCE [LARGE SCALE GENOMIC DNA]</scope>
    <source>
        <strain>IP32953</strain>
    </source>
</reference>
<name>RL2_YERPS</name>
<gene>
    <name evidence="1" type="primary">rplB</name>
    <name type="ordered locus">YPTB3695</name>
</gene>
<feature type="chain" id="PRO_0000129659" description="Large ribosomal subunit protein uL2">
    <location>
        <begin position="1"/>
        <end position="274"/>
    </location>
</feature>
<feature type="region of interest" description="Disordered" evidence="2">
    <location>
        <begin position="221"/>
        <end position="274"/>
    </location>
</feature>
<organism>
    <name type="scientific">Yersinia pseudotuberculosis serotype I (strain IP32953)</name>
    <dbReference type="NCBI Taxonomy" id="273123"/>
    <lineage>
        <taxon>Bacteria</taxon>
        <taxon>Pseudomonadati</taxon>
        <taxon>Pseudomonadota</taxon>
        <taxon>Gammaproteobacteria</taxon>
        <taxon>Enterobacterales</taxon>
        <taxon>Yersiniaceae</taxon>
        <taxon>Yersinia</taxon>
    </lineage>
</organism>
<accession>P60437</accession>
<accession>P11255</accession>
<accession>Q664S4</accession>
<sequence>MAIVKCKPTSPGRRHVVKVVNPELHKGKPYAPLLEKLSKSGGRNNNGRITTRHIGGGHKQHYRLVDFKRNKDGIPAVVERLEYDPNRSANIALVLYKDGERRYILAPKGLKAGDQIQSGVDAAIKAGNTLPMRNIPVGSTVHNVEMKPGKGGQLARSAGAYVQIVARDGSYVTLRLRSGEMRKVQADCRATLGEVGNAEHMLRVLGKAGASRWRGIRPTVRGTAMNPVDHPHGGGEGRNFGKHPVTPWGVQTKGKKTRSNKRTDKFIVRRRSKK</sequence>
<evidence type="ECO:0000255" key="1">
    <source>
        <dbReference type="HAMAP-Rule" id="MF_01320"/>
    </source>
</evidence>
<evidence type="ECO:0000256" key="2">
    <source>
        <dbReference type="SAM" id="MobiDB-lite"/>
    </source>
</evidence>
<evidence type="ECO:0000305" key="3"/>